<comment type="similarity">
    <text evidence="1">Belongs to the bacterial ribosomal protein bS21 family.</text>
</comment>
<protein>
    <recommendedName>
        <fullName evidence="1">Small ribosomal subunit protein bS21</fullName>
    </recommendedName>
    <alternativeName>
        <fullName evidence="2">30S ribosomal protein S21</fullName>
    </alternativeName>
</protein>
<reference key="1">
    <citation type="submission" date="2009-02" db="EMBL/GenBank/DDBJ databases">
        <title>Genome sequence of Bacillus cereus 03BB102.</title>
        <authorList>
            <person name="Dodson R.J."/>
            <person name="Jackson P."/>
            <person name="Munk A.C."/>
            <person name="Brettin T."/>
            <person name="Bruce D."/>
            <person name="Detter C."/>
            <person name="Tapia R."/>
            <person name="Han C."/>
            <person name="Sutton G."/>
            <person name="Sims D."/>
        </authorList>
    </citation>
    <scope>NUCLEOTIDE SEQUENCE [LARGE SCALE GENOMIC DNA]</scope>
    <source>
        <strain>03BB102</strain>
    </source>
</reference>
<accession>C1ESK3</accession>
<organism>
    <name type="scientific">Bacillus cereus (strain 03BB102)</name>
    <dbReference type="NCBI Taxonomy" id="572264"/>
    <lineage>
        <taxon>Bacteria</taxon>
        <taxon>Bacillati</taxon>
        <taxon>Bacillota</taxon>
        <taxon>Bacilli</taxon>
        <taxon>Bacillales</taxon>
        <taxon>Bacillaceae</taxon>
        <taxon>Bacillus</taxon>
        <taxon>Bacillus cereus group</taxon>
    </lineage>
</organism>
<sequence>MSKTVVRKNESLEDALRRFKRSVSKTGTLAEARKREFYEKPSVKRKKKSEAARKRKF</sequence>
<evidence type="ECO:0000255" key="1">
    <source>
        <dbReference type="HAMAP-Rule" id="MF_00358"/>
    </source>
</evidence>
<evidence type="ECO:0000305" key="2"/>
<dbReference type="EMBL" id="CP001407">
    <property type="protein sequence ID" value="ACO29760.1"/>
    <property type="molecule type" value="Genomic_DNA"/>
</dbReference>
<dbReference type="RefSeq" id="WP_000048061.1">
    <property type="nucleotide sequence ID" value="NZ_CP009318.1"/>
</dbReference>
<dbReference type="SMR" id="C1ESK3"/>
<dbReference type="GeneID" id="93006791"/>
<dbReference type="KEGG" id="bcx:BCA_4420"/>
<dbReference type="PATRIC" id="fig|572264.18.peg.4368"/>
<dbReference type="Proteomes" id="UP000002210">
    <property type="component" value="Chromosome"/>
</dbReference>
<dbReference type="GO" id="GO:1990904">
    <property type="term" value="C:ribonucleoprotein complex"/>
    <property type="evidence" value="ECO:0007669"/>
    <property type="project" value="UniProtKB-KW"/>
</dbReference>
<dbReference type="GO" id="GO:0005840">
    <property type="term" value="C:ribosome"/>
    <property type="evidence" value="ECO:0007669"/>
    <property type="project" value="UniProtKB-KW"/>
</dbReference>
<dbReference type="GO" id="GO:0003735">
    <property type="term" value="F:structural constituent of ribosome"/>
    <property type="evidence" value="ECO:0007669"/>
    <property type="project" value="InterPro"/>
</dbReference>
<dbReference type="GO" id="GO:0006412">
    <property type="term" value="P:translation"/>
    <property type="evidence" value="ECO:0007669"/>
    <property type="project" value="UniProtKB-UniRule"/>
</dbReference>
<dbReference type="Gene3D" id="1.20.5.1150">
    <property type="entry name" value="Ribosomal protein S8"/>
    <property type="match status" value="1"/>
</dbReference>
<dbReference type="HAMAP" id="MF_00358">
    <property type="entry name" value="Ribosomal_bS21"/>
    <property type="match status" value="1"/>
</dbReference>
<dbReference type="InterPro" id="IPR001911">
    <property type="entry name" value="Ribosomal_bS21"/>
</dbReference>
<dbReference type="InterPro" id="IPR018278">
    <property type="entry name" value="Ribosomal_bS21_CS"/>
</dbReference>
<dbReference type="InterPro" id="IPR038380">
    <property type="entry name" value="Ribosomal_bS21_sf"/>
</dbReference>
<dbReference type="NCBIfam" id="TIGR00030">
    <property type="entry name" value="S21p"/>
    <property type="match status" value="1"/>
</dbReference>
<dbReference type="PANTHER" id="PTHR21109">
    <property type="entry name" value="MITOCHONDRIAL 28S RIBOSOMAL PROTEIN S21"/>
    <property type="match status" value="1"/>
</dbReference>
<dbReference type="PANTHER" id="PTHR21109:SF22">
    <property type="entry name" value="SMALL RIBOSOMAL SUBUNIT PROTEIN BS21"/>
    <property type="match status" value="1"/>
</dbReference>
<dbReference type="Pfam" id="PF01165">
    <property type="entry name" value="Ribosomal_S21"/>
    <property type="match status" value="1"/>
</dbReference>
<dbReference type="PRINTS" id="PR00976">
    <property type="entry name" value="RIBOSOMALS21"/>
</dbReference>
<dbReference type="PROSITE" id="PS01181">
    <property type="entry name" value="RIBOSOMAL_S21"/>
    <property type="match status" value="1"/>
</dbReference>
<gene>
    <name evidence="1" type="primary">rpsU</name>
    <name type="ordered locus">BCA_4420</name>
</gene>
<name>RS21_BACC3</name>
<feature type="chain" id="PRO_1000194279" description="Small ribosomal subunit protein bS21">
    <location>
        <begin position="1"/>
        <end position="57"/>
    </location>
</feature>
<proteinExistence type="inferred from homology"/>
<keyword id="KW-0687">Ribonucleoprotein</keyword>
<keyword id="KW-0689">Ribosomal protein</keyword>